<feature type="chain" id="PRO_0000089959" description="Putative uncharacterized protein DHRS4-AS1">
    <location>
        <begin position="1"/>
        <end position="65"/>
    </location>
</feature>
<dbReference type="EMBL" id="AF116636">
    <property type="protein sequence ID" value="AAF71059.1"/>
    <property type="molecule type" value="mRNA"/>
</dbReference>
<dbReference type="EMBL" id="AL136419">
    <property type="status" value="NOT_ANNOTATED_CDS"/>
    <property type="molecule type" value="Genomic_DNA"/>
</dbReference>
<dbReference type="FunCoup" id="Q9P1J3">
    <property type="interactions" value="1"/>
</dbReference>
<dbReference type="IntAct" id="Q9P1J3">
    <property type="interactions" value="1"/>
</dbReference>
<dbReference type="BioMuta" id="HGNC:23175"/>
<dbReference type="PeptideAtlas" id="Q9P1J3"/>
<dbReference type="AGR" id="HGNC:23175"/>
<dbReference type="GeneCards" id="DHRS4-AS1"/>
<dbReference type="HGNC" id="HGNC:23175">
    <property type="gene designation" value="DHRS4-AS1"/>
</dbReference>
<dbReference type="neXtProt" id="NX_Q9P1J3"/>
<dbReference type="InParanoid" id="Q9P1J3"/>
<dbReference type="PAN-GO" id="Q9P1J3">
    <property type="GO annotations" value="0 GO annotations based on evolutionary models"/>
</dbReference>
<dbReference type="PhylomeDB" id="Q9P1J3"/>
<dbReference type="PathwayCommons" id="Q9P1J3"/>
<dbReference type="Pharos" id="Q9P1J3">
    <property type="development level" value="Tdark"/>
</dbReference>
<dbReference type="Proteomes" id="UP000005640">
    <property type="component" value="Unplaced"/>
</dbReference>
<dbReference type="RNAct" id="Q9P1J3">
    <property type="molecule type" value="protein"/>
</dbReference>
<name>DHAS1_HUMAN</name>
<proteinExistence type="uncertain"/>
<protein>
    <recommendedName>
        <fullName>Putative uncharacterized protein DHRS4-AS1</fullName>
    </recommendedName>
    <alternativeName>
        <fullName>DHRS4 antisense RNA 1</fullName>
    </alternativeName>
    <alternativeName>
        <fullName>DHRS4 antisense gene protein 1</fullName>
    </alternativeName>
</protein>
<organism>
    <name type="scientific">Homo sapiens</name>
    <name type="common">Human</name>
    <dbReference type="NCBI Taxonomy" id="9606"/>
    <lineage>
        <taxon>Eukaryota</taxon>
        <taxon>Metazoa</taxon>
        <taxon>Chordata</taxon>
        <taxon>Craniata</taxon>
        <taxon>Vertebrata</taxon>
        <taxon>Euteleostomi</taxon>
        <taxon>Mammalia</taxon>
        <taxon>Eutheria</taxon>
        <taxon>Euarchontoglires</taxon>
        <taxon>Primates</taxon>
        <taxon>Haplorrhini</taxon>
        <taxon>Catarrhini</taxon>
        <taxon>Hominidae</taxon>
        <taxon>Homo</taxon>
    </lineage>
</organism>
<reference key="1">
    <citation type="submission" date="1998-12" db="EMBL/GenBank/DDBJ databases">
        <title>Functional prediction of the coding sequences of 121 new genes deduced by analysis of cDNA clones from human fetal liver.</title>
        <authorList>
            <person name="Zhang C."/>
            <person name="Yu Y."/>
            <person name="Zhang S."/>
            <person name="Wei H."/>
            <person name="Zhou G."/>
            <person name="Ouyang S."/>
            <person name="Luo L."/>
            <person name="Bi J."/>
            <person name="Liu M."/>
            <person name="He F."/>
        </authorList>
    </citation>
    <scope>NUCLEOTIDE SEQUENCE [LARGE SCALE MRNA]</scope>
    <source>
        <tissue>Fetal liver</tissue>
    </source>
</reference>
<reference key="2">
    <citation type="journal article" date="2003" name="Nature">
        <title>The DNA sequence and analysis of human chromosome 14.</title>
        <authorList>
            <person name="Heilig R."/>
            <person name="Eckenberg R."/>
            <person name="Petit J.-L."/>
            <person name="Fonknechten N."/>
            <person name="Da Silva C."/>
            <person name="Cattolico L."/>
            <person name="Levy M."/>
            <person name="Barbe V."/>
            <person name="De Berardinis V."/>
            <person name="Ureta-Vidal A."/>
            <person name="Pelletier E."/>
            <person name="Vico V."/>
            <person name="Anthouard V."/>
            <person name="Rowen L."/>
            <person name="Madan A."/>
            <person name="Qin S."/>
            <person name="Sun H."/>
            <person name="Du H."/>
            <person name="Pepin K."/>
            <person name="Artiguenave F."/>
            <person name="Robert C."/>
            <person name="Cruaud C."/>
            <person name="Bruels T."/>
            <person name="Jaillon O."/>
            <person name="Friedlander L."/>
            <person name="Samson G."/>
            <person name="Brottier P."/>
            <person name="Cure S."/>
            <person name="Segurens B."/>
            <person name="Aniere F."/>
            <person name="Samain S."/>
            <person name="Crespeau H."/>
            <person name="Abbasi N."/>
            <person name="Aiach N."/>
            <person name="Boscus D."/>
            <person name="Dickhoff R."/>
            <person name="Dors M."/>
            <person name="Dubois I."/>
            <person name="Friedman C."/>
            <person name="Gouyvenoux M."/>
            <person name="James R."/>
            <person name="Madan A."/>
            <person name="Mairey-Estrada B."/>
            <person name="Mangenot S."/>
            <person name="Martins N."/>
            <person name="Menard M."/>
            <person name="Oztas S."/>
            <person name="Ratcliffe A."/>
            <person name="Shaffer T."/>
            <person name="Trask B."/>
            <person name="Vacherie B."/>
            <person name="Bellemere C."/>
            <person name="Belser C."/>
            <person name="Besnard-Gonnet M."/>
            <person name="Bartol-Mavel D."/>
            <person name="Boutard M."/>
            <person name="Briez-Silla S."/>
            <person name="Combette S."/>
            <person name="Dufosse-Laurent V."/>
            <person name="Ferron C."/>
            <person name="Lechaplais C."/>
            <person name="Louesse C."/>
            <person name="Muselet D."/>
            <person name="Magdelenat G."/>
            <person name="Pateau E."/>
            <person name="Petit E."/>
            <person name="Sirvain-Trukniewicz P."/>
            <person name="Trybou A."/>
            <person name="Vega-Czarny N."/>
            <person name="Bataille E."/>
            <person name="Bluet E."/>
            <person name="Bordelais I."/>
            <person name="Dubois M."/>
            <person name="Dumont C."/>
            <person name="Guerin T."/>
            <person name="Haffray S."/>
            <person name="Hammadi R."/>
            <person name="Muanga J."/>
            <person name="Pellouin V."/>
            <person name="Robert D."/>
            <person name="Wunderle E."/>
            <person name="Gauguet G."/>
            <person name="Roy A."/>
            <person name="Sainte-Marthe L."/>
            <person name="Verdier J."/>
            <person name="Verdier-Discala C."/>
            <person name="Hillier L.W."/>
            <person name="Fulton L."/>
            <person name="McPherson J."/>
            <person name="Matsuda F."/>
            <person name="Wilson R."/>
            <person name="Scarpelli C."/>
            <person name="Gyapay G."/>
            <person name="Wincker P."/>
            <person name="Saurin W."/>
            <person name="Quetier F."/>
            <person name="Waterston R."/>
            <person name="Hood L."/>
            <person name="Weissenbach J."/>
        </authorList>
    </citation>
    <scope>NUCLEOTIDE SEQUENCE [LARGE SCALE GENOMIC DNA]</scope>
</reference>
<keyword id="KW-1185">Reference proteome</keyword>
<sequence length="65" mass="7343">MSEQNICNQKDKSTLPFCQAHLCEETTNRLCVSNKAVYSLECKWAESENRVSEGRWGRGCFIGVG</sequence>
<accession>Q9P1J3</accession>
<gene>
    <name type="primary">DHRS4-AS1</name>
    <name type="synonym">C14orf167</name>
    <name type="ORF">PRO1488</name>
</gene>
<evidence type="ECO:0000305" key="1"/>
<comment type="caution">
    <text evidence="1">Product of a dubious CDS prediction.</text>
</comment>